<accession>Q45583</accession>
<accession>O08072</accession>
<accession>Q797S0</accession>
<comment type="sequence caution" evidence="2">
    <conflict type="frameshift">
        <sequence resource="EMBL-CDS" id="BAA19505"/>
    </conflict>
</comment>
<proteinExistence type="predicted"/>
<evidence type="ECO:0000255" key="1">
    <source>
        <dbReference type="PROSITE-ProRule" id="PRU00532"/>
    </source>
</evidence>
<evidence type="ECO:0000305" key="2"/>
<reference key="1">
    <citation type="journal article" date="1997" name="Microbiology">
        <title>Sequence and analysis of a 31 kb segment of the Bacillus subtilis chromosome in the area of the rrnH and rrnG operons.</title>
        <authorList>
            <person name="Liu H."/>
            <person name="Haga K."/>
            <person name="Yasumoto K."/>
            <person name="Ohashi Y."/>
            <person name="Yoshikawa H."/>
            <person name="Takahashi H."/>
        </authorList>
    </citation>
    <scope>NUCLEOTIDE SEQUENCE [GENOMIC DNA]</scope>
    <source>
        <strain>168</strain>
    </source>
</reference>
<reference key="2">
    <citation type="journal article" date="1997" name="Nature">
        <title>The complete genome sequence of the Gram-positive bacterium Bacillus subtilis.</title>
        <authorList>
            <person name="Kunst F."/>
            <person name="Ogasawara N."/>
            <person name="Moszer I."/>
            <person name="Albertini A.M."/>
            <person name="Alloni G."/>
            <person name="Azevedo V."/>
            <person name="Bertero M.G."/>
            <person name="Bessieres P."/>
            <person name="Bolotin A."/>
            <person name="Borchert S."/>
            <person name="Borriss R."/>
            <person name="Boursier L."/>
            <person name="Brans A."/>
            <person name="Braun M."/>
            <person name="Brignell S.C."/>
            <person name="Bron S."/>
            <person name="Brouillet S."/>
            <person name="Bruschi C.V."/>
            <person name="Caldwell B."/>
            <person name="Capuano V."/>
            <person name="Carter N.M."/>
            <person name="Choi S.-K."/>
            <person name="Codani J.-J."/>
            <person name="Connerton I.F."/>
            <person name="Cummings N.J."/>
            <person name="Daniel R.A."/>
            <person name="Denizot F."/>
            <person name="Devine K.M."/>
            <person name="Duesterhoeft A."/>
            <person name="Ehrlich S.D."/>
            <person name="Emmerson P.T."/>
            <person name="Entian K.-D."/>
            <person name="Errington J."/>
            <person name="Fabret C."/>
            <person name="Ferrari E."/>
            <person name="Foulger D."/>
            <person name="Fritz C."/>
            <person name="Fujita M."/>
            <person name="Fujita Y."/>
            <person name="Fuma S."/>
            <person name="Galizzi A."/>
            <person name="Galleron N."/>
            <person name="Ghim S.-Y."/>
            <person name="Glaser P."/>
            <person name="Goffeau A."/>
            <person name="Golightly E.J."/>
            <person name="Grandi G."/>
            <person name="Guiseppi G."/>
            <person name="Guy B.J."/>
            <person name="Haga K."/>
            <person name="Haiech J."/>
            <person name="Harwood C.R."/>
            <person name="Henaut A."/>
            <person name="Hilbert H."/>
            <person name="Holsappel S."/>
            <person name="Hosono S."/>
            <person name="Hullo M.-F."/>
            <person name="Itaya M."/>
            <person name="Jones L.-M."/>
            <person name="Joris B."/>
            <person name="Karamata D."/>
            <person name="Kasahara Y."/>
            <person name="Klaerr-Blanchard M."/>
            <person name="Klein C."/>
            <person name="Kobayashi Y."/>
            <person name="Koetter P."/>
            <person name="Koningstein G."/>
            <person name="Krogh S."/>
            <person name="Kumano M."/>
            <person name="Kurita K."/>
            <person name="Lapidus A."/>
            <person name="Lardinois S."/>
            <person name="Lauber J."/>
            <person name="Lazarevic V."/>
            <person name="Lee S.-M."/>
            <person name="Levine A."/>
            <person name="Liu H."/>
            <person name="Masuda S."/>
            <person name="Mauel C."/>
            <person name="Medigue C."/>
            <person name="Medina N."/>
            <person name="Mellado R.P."/>
            <person name="Mizuno M."/>
            <person name="Moestl D."/>
            <person name="Nakai S."/>
            <person name="Noback M."/>
            <person name="Noone D."/>
            <person name="O'Reilly M."/>
            <person name="Ogawa K."/>
            <person name="Ogiwara A."/>
            <person name="Oudega B."/>
            <person name="Park S.-H."/>
            <person name="Parro V."/>
            <person name="Pohl T.M."/>
            <person name="Portetelle D."/>
            <person name="Porwollik S."/>
            <person name="Prescott A.M."/>
            <person name="Presecan E."/>
            <person name="Pujic P."/>
            <person name="Purnelle B."/>
            <person name="Rapoport G."/>
            <person name="Rey M."/>
            <person name="Reynolds S."/>
            <person name="Rieger M."/>
            <person name="Rivolta C."/>
            <person name="Rocha E."/>
            <person name="Roche B."/>
            <person name="Rose M."/>
            <person name="Sadaie Y."/>
            <person name="Sato T."/>
            <person name="Scanlan E."/>
            <person name="Schleich S."/>
            <person name="Schroeter R."/>
            <person name="Scoffone F."/>
            <person name="Sekiguchi J."/>
            <person name="Sekowska A."/>
            <person name="Seror S.J."/>
            <person name="Serror P."/>
            <person name="Shin B.-S."/>
            <person name="Soldo B."/>
            <person name="Sorokin A."/>
            <person name="Tacconi E."/>
            <person name="Takagi T."/>
            <person name="Takahashi H."/>
            <person name="Takemaru K."/>
            <person name="Takeuchi M."/>
            <person name="Tamakoshi A."/>
            <person name="Tanaka T."/>
            <person name="Terpstra P."/>
            <person name="Tognoni A."/>
            <person name="Tosato V."/>
            <person name="Uchiyama S."/>
            <person name="Vandenbol M."/>
            <person name="Vannier F."/>
            <person name="Vassarotti A."/>
            <person name="Viari A."/>
            <person name="Wambutt R."/>
            <person name="Wedler E."/>
            <person name="Wedler H."/>
            <person name="Weitzenegger T."/>
            <person name="Winters P."/>
            <person name="Wipat A."/>
            <person name="Yamamoto H."/>
            <person name="Yamane K."/>
            <person name="Yasumoto K."/>
            <person name="Yata K."/>
            <person name="Yoshida K."/>
            <person name="Yoshikawa H.-F."/>
            <person name="Zumstein E."/>
            <person name="Yoshikawa H."/>
            <person name="Danchin A."/>
        </authorList>
    </citation>
    <scope>NUCLEOTIDE SEQUENCE [LARGE SCALE GENOMIC DNA]</scope>
    <source>
        <strain>168</strain>
    </source>
</reference>
<reference key="3">
    <citation type="journal article" date="2009" name="Microbiology">
        <title>From a consortium sequence to a unified sequence: the Bacillus subtilis 168 reference genome a decade later.</title>
        <authorList>
            <person name="Barbe V."/>
            <person name="Cruveiller S."/>
            <person name="Kunst F."/>
            <person name="Lenoble P."/>
            <person name="Meurice G."/>
            <person name="Sekowska A."/>
            <person name="Vallenet D."/>
            <person name="Wang T."/>
            <person name="Moszer I."/>
            <person name="Medigue C."/>
            <person name="Danchin A."/>
        </authorList>
    </citation>
    <scope>SEQUENCE REVISION TO C-TERMINUS</scope>
</reference>
<name>YBBJ_BACSU</name>
<sequence>MTQDISLSFYKPEHLPELQSFTLTNDDKRFTSLPKEVLSQALGIQDRYPVVILKDDLPVGFFILHASKETLASYSNNPFALLLSSLSLTAVHHGKGYAKKAMLLLPAFVSGYFPWCDEIILAVNHLNIRAKHLYMKSGFLDKGRRRIGPLGEQLILHHFL</sequence>
<dbReference type="EC" id="2.3.1.-"/>
<dbReference type="EMBL" id="AB002150">
    <property type="protein sequence ID" value="BAA19505.1"/>
    <property type="status" value="ALT_FRAME"/>
    <property type="molecule type" value="Genomic_DNA"/>
</dbReference>
<dbReference type="EMBL" id="AL009126">
    <property type="protein sequence ID" value="CAB11947.2"/>
    <property type="molecule type" value="Genomic_DNA"/>
</dbReference>
<dbReference type="PIR" id="E69744">
    <property type="entry name" value="E69744"/>
</dbReference>
<dbReference type="RefSeq" id="NP_388052.2">
    <property type="nucleotide sequence ID" value="NC_000964.3"/>
</dbReference>
<dbReference type="RefSeq" id="WP_003234962.1">
    <property type="nucleotide sequence ID" value="NZ_OZ025638.1"/>
</dbReference>
<dbReference type="SMR" id="Q45583"/>
<dbReference type="FunCoup" id="Q45583">
    <property type="interactions" value="80"/>
</dbReference>
<dbReference type="STRING" id="224308.BSU01710"/>
<dbReference type="PaxDb" id="224308-BSU01710"/>
<dbReference type="EnsemblBacteria" id="CAB11947">
    <property type="protein sequence ID" value="CAB11947"/>
    <property type="gene ID" value="BSU_01710"/>
</dbReference>
<dbReference type="GeneID" id="938883"/>
<dbReference type="KEGG" id="bsu:BSU01710"/>
<dbReference type="PATRIC" id="fig|224308.179.peg.177"/>
<dbReference type="eggNOG" id="COG1670">
    <property type="taxonomic scope" value="Bacteria"/>
</dbReference>
<dbReference type="InParanoid" id="Q45583"/>
<dbReference type="OrthoDB" id="66776at2"/>
<dbReference type="PhylomeDB" id="Q45583"/>
<dbReference type="BioCyc" id="BSUB:BSU01710-MONOMER"/>
<dbReference type="Proteomes" id="UP000001570">
    <property type="component" value="Chromosome"/>
</dbReference>
<dbReference type="GO" id="GO:0016747">
    <property type="term" value="F:acyltransferase activity, transferring groups other than amino-acyl groups"/>
    <property type="evidence" value="ECO:0000318"/>
    <property type="project" value="GO_Central"/>
</dbReference>
<dbReference type="Gene3D" id="3.40.630.30">
    <property type="match status" value="1"/>
</dbReference>
<dbReference type="InterPro" id="IPR016181">
    <property type="entry name" value="Acyl_CoA_acyltransferase"/>
</dbReference>
<dbReference type="InterPro" id="IPR000182">
    <property type="entry name" value="GNAT_dom"/>
</dbReference>
<dbReference type="SUPFAM" id="SSF55729">
    <property type="entry name" value="Acyl-CoA N-acyltransferases (Nat)"/>
    <property type="match status" value="1"/>
</dbReference>
<dbReference type="PROSITE" id="PS51186">
    <property type="entry name" value="GNAT"/>
    <property type="match status" value="1"/>
</dbReference>
<protein>
    <recommendedName>
        <fullName>Uncharacterized N-acetyltransferase YbbJ</fullName>
        <ecNumber>2.3.1.-</ecNumber>
    </recommendedName>
</protein>
<gene>
    <name type="primary">ybbJ</name>
    <name type="ordered locus">BSU01710</name>
</gene>
<keyword id="KW-0012">Acyltransferase</keyword>
<keyword id="KW-1185">Reference proteome</keyword>
<keyword id="KW-0808">Transferase</keyword>
<organism>
    <name type="scientific">Bacillus subtilis (strain 168)</name>
    <dbReference type="NCBI Taxonomy" id="224308"/>
    <lineage>
        <taxon>Bacteria</taxon>
        <taxon>Bacillati</taxon>
        <taxon>Bacillota</taxon>
        <taxon>Bacilli</taxon>
        <taxon>Bacillales</taxon>
        <taxon>Bacillaceae</taxon>
        <taxon>Bacillus</taxon>
    </lineage>
</organism>
<feature type="chain" id="PRO_0000360440" description="Uncharacterized N-acetyltransferase YbbJ">
    <location>
        <begin position="1"/>
        <end position="160"/>
    </location>
</feature>
<feature type="domain" description="N-acetyltransferase" evidence="1">
    <location>
        <begin position="5"/>
        <end position="160"/>
    </location>
</feature>